<name>LSRD_YERPB</name>
<keyword id="KW-0997">Cell inner membrane</keyword>
<keyword id="KW-1003">Cell membrane</keyword>
<keyword id="KW-0472">Membrane</keyword>
<keyword id="KW-0812">Transmembrane</keyword>
<keyword id="KW-1133">Transmembrane helix</keyword>
<keyword id="KW-0813">Transport</keyword>
<organism>
    <name type="scientific">Yersinia pseudotuberculosis serotype IB (strain PB1/+)</name>
    <dbReference type="NCBI Taxonomy" id="502801"/>
    <lineage>
        <taxon>Bacteria</taxon>
        <taxon>Pseudomonadati</taxon>
        <taxon>Pseudomonadota</taxon>
        <taxon>Gammaproteobacteria</taxon>
        <taxon>Enterobacterales</taxon>
        <taxon>Yersiniaceae</taxon>
        <taxon>Yersinia</taxon>
    </lineage>
</organism>
<comment type="function">
    <text evidence="1">Part of the ABC transporter complex LsrABCD involved in autoinducer 2 (AI-2) import. Probably responsible for the translocation of the substrate across the membrane (By similarity).</text>
</comment>
<comment type="subunit">
    <text evidence="1">The complex is composed of two ATP-binding proteins (LsrA), two transmembrane proteins (LsrC and LsrD) and a solute-binding protein (LsrB).</text>
</comment>
<comment type="subcellular location">
    <subcellularLocation>
        <location evidence="1">Cell inner membrane</location>
        <topology evidence="1">Multi-pass membrane protein</topology>
    </subcellularLocation>
</comment>
<comment type="similarity">
    <text evidence="3">Belongs to the binding-protein-dependent transport system permease family. AraH/RbsC subfamily.</text>
</comment>
<gene>
    <name type="primary">lsrD</name>
    <name type="ordered locus">YPTS_0574</name>
</gene>
<accession>B2K3F9</accession>
<reference key="1">
    <citation type="submission" date="2008-04" db="EMBL/GenBank/DDBJ databases">
        <title>Complete sequence of Yersinia pseudotuberculosis PB1/+.</title>
        <authorList>
            <person name="Copeland A."/>
            <person name="Lucas S."/>
            <person name="Lapidus A."/>
            <person name="Glavina del Rio T."/>
            <person name="Dalin E."/>
            <person name="Tice H."/>
            <person name="Bruce D."/>
            <person name="Goodwin L."/>
            <person name="Pitluck S."/>
            <person name="Munk A.C."/>
            <person name="Brettin T."/>
            <person name="Detter J.C."/>
            <person name="Han C."/>
            <person name="Tapia R."/>
            <person name="Schmutz J."/>
            <person name="Larimer F."/>
            <person name="Land M."/>
            <person name="Hauser L."/>
            <person name="Challacombe J.F."/>
            <person name="Green L."/>
            <person name="Lindler L.E."/>
            <person name="Nikolich M.P."/>
            <person name="Richardson P."/>
        </authorList>
    </citation>
    <scope>NUCLEOTIDE SEQUENCE [LARGE SCALE GENOMIC DNA]</scope>
    <source>
        <strain>PB1/+</strain>
    </source>
</reference>
<sequence>MNLYRRYGWELTLAALLVLEILLFGLSNSRMLDINVLLFSTSDFICIGIVALPLTMVIVSGGIDISFGSTIGLCAIFLGIVFQAGVPMSVAIPLTVLVGALCGLINAGLILYTGVNPLVITLGTLYLFGGSALLLSGLSGATGYEGIGGFPAAFTDFANQTLFGLPIPLVIFMLCVLLFWLLMHRTHSGRHVFLIGQSSRVARYSALPIARTLCMLYAMTGVASAIAAILLVSYFGSARSDLGASFLMPAITAVVLGGANIYGGSGSILGTALAVLLVGYLQQGLQMIGTPNQISSALSGALLILVVVGRSISLHRHLIYEWLQRRRSRKASV</sequence>
<feature type="chain" id="PRO_0000351386" description="Autoinducer 2 import system permease protein LsrD">
    <location>
        <begin position="1"/>
        <end position="333"/>
    </location>
</feature>
<feature type="transmembrane region" description="Helical" evidence="2">
    <location>
        <begin position="7"/>
        <end position="27"/>
    </location>
</feature>
<feature type="transmembrane region" description="Helical" evidence="2">
    <location>
        <begin position="45"/>
        <end position="65"/>
    </location>
</feature>
<feature type="transmembrane region" description="Helical" evidence="2">
    <location>
        <begin position="67"/>
        <end position="87"/>
    </location>
</feature>
<feature type="transmembrane region" description="Helical" evidence="2">
    <location>
        <begin position="90"/>
        <end position="110"/>
    </location>
</feature>
<feature type="transmembrane region" description="Helical" evidence="2">
    <location>
        <begin position="118"/>
        <end position="138"/>
    </location>
</feature>
<feature type="transmembrane region" description="Helical" evidence="2">
    <location>
        <begin position="162"/>
        <end position="182"/>
    </location>
</feature>
<feature type="transmembrane region" description="Helical" evidence="2">
    <location>
        <begin position="212"/>
        <end position="232"/>
    </location>
</feature>
<feature type="transmembrane region" description="Helical" evidence="2">
    <location>
        <begin position="240"/>
        <end position="260"/>
    </location>
</feature>
<feature type="transmembrane region" description="Helical" evidence="2">
    <location>
        <begin position="261"/>
        <end position="281"/>
    </location>
</feature>
<feature type="transmembrane region" description="Helical" evidence="2">
    <location>
        <begin position="288"/>
        <end position="308"/>
    </location>
</feature>
<dbReference type="EMBL" id="CP001048">
    <property type="protein sequence ID" value="ACC87558.1"/>
    <property type="molecule type" value="Genomic_DNA"/>
</dbReference>
<dbReference type="RefSeq" id="WP_012413458.1">
    <property type="nucleotide sequence ID" value="NZ_CP009780.1"/>
</dbReference>
<dbReference type="KEGG" id="ypb:YPTS_0574"/>
<dbReference type="PATRIC" id="fig|502801.10.peg.4250"/>
<dbReference type="GO" id="GO:0005886">
    <property type="term" value="C:plasma membrane"/>
    <property type="evidence" value="ECO:0007669"/>
    <property type="project" value="UniProtKB-SubCell"/>
</dbReference>
<dbReference type="GO" id="GO:0022857">
    <property type="term" value="F:transmembrane transporter activity"/>
    <property type="evidence" value="ECO:0007669"/>
    <property type="project" value="InterPro"/>
</dbReference>
<dbReference type="CDD" id="cd06579">
    <property type="entry name" value="TM_PBP1_transp_AraH_like"/>
    <property type="match status" value="1"/>
</dbReference>
<dbReference type="InterPro" id="IPR001851">
    <property type="entry name" value="ABC_transp_permease"/>
</dbReference>
<dbReference type="NCBIfam" id="NF011612">
    <property type="entry name" value="PRK15038.1"/>
    <property type="match status" value="1"/>
</dbReference>
<dbReference type="PANTHER" id="PTHR32196">
    <property type="entry name" value="ABC TRANSPORTER PERMEASE PROTEIN YPHD-RELATED-RELATED"/>
    <property type="match status" value="1"/>
</dbReference>
<dbReference type="PANTHER" id="PTHR32196:SF71">
    <property type="entry name" value="AUTOINDUCER 2 IMPORT SYSTEM PERMEASE PROTEIN LSRD"/>
    <property type="match status" value="1"/>
</dbReference>
<dbReference type="Pfam" id="PF02653">
    <property type="entry name" value="BPD_transp_2"/>
    <property type="match status" value="1"/>
</dbReference>
<protein>
    <recommendedName>
        <fullName>Autoinducer 2 import system permease protein LsrD</fullName>
        <shortName>AI-2 import system permease protein LsrD</shortName>
    </recommendedName>
</protein>
<proteinExistence type="inferred from homology"/>
<evidence type="ECO:0000250" key="1"/>
<evidence type="ECO:0000255" key="2"/>
<evidence type="ECO:0000305" key="3"/>